<feature type="chain" id="PRO_0000189083" description="1-deoxy-D-xylulose-5-phosphate synthase">
    <location>
        <begin position="1"/>
        <end position="630"/>
    </location>
</feature>
<feature type="binding site" evidence="1">
    <location>
        <position position="72"/>
    </location>
    <ligand>
        <name>thiamine diphosphate</name>
        <dbReference type="ChEBI" id="CHEBI:58937"/>
    </ligand>
</feature>
<feature type="binding site" evidence="1">
    <location>
        <begin position="113"/>
        <end position="115"/>
    </location>
    <ligand>
        <name>thiamine diphosphate</name>
        <dbReference type="ChEBI" id="CHEBI:58937"/>
    </ligand>
</feature>
<feature type="binding site" evidence="1">
    <location>
        <position position="144"/>
    </location>
    <ligand>
        <name>Mg(2+)</name>
        <dbReference type="ChEBI" id="CHEBI:18420"/>
    </ligand>
</feature>
<feature type="binding site" evidence="1">
    <location>
        <begin position="145"/>
        <end position="146"/>
    </location>
    <ligand>
        <name>thiamine diphosphate</name>
        <dbReference type="ChEBI" id="CHEBI:58937"/>
    </ligand>
</feature>
<feature type="binding site" evidence="1">
    <location>
        <position position="173"/>
    </location>
    <ligand>
        <name>Mg(2+)</name>
        <dbReference type="ChEBI" id="CHEBI:18420"/>
    </ligand>
</feature>
<feature type="binding site" evidence="1">
    <location>
        <position position="173"/>
    </location>
    <ligand>
        <name>thiamine diphosphate</name>
        <dbReference type="ChEBI" id="CHEBI:58937"/>
    </ligand>
</feature>
<feature type="binding site" evidence="1">
    <location>
        <position position="284"/>
    </location>
    <ligand>
        <name>thiamine diphosphate</name>
        <dbReference type="ChEBI" id="CHEBI:58937"/>
    </ligand>
</feature>
<feature type="binding site" evidence="1">
    <location>
        <position position="367"/>
    </location>
    <ligand>
        <name>thiamine diphosphate</name>
        <dbReference type="ChEBI" id="CHEBI:58937"/>
    </ligand>
</feature>
<organism>
    <name type="scientific">Bacillus anthracis</name>
    <dbReference type="NCBI Taxonomy" id="1392"/>
    <lineage>
        <taxon>Bacteria</taxon>
        <taxon>Bacillati</taxon>
        <taxon>Bacillota</taxon>
        <taxon>Bacilli</taxon>
        <taxon>Bacillales</taxon>
        <taxon>Bacillaceae</taxon>
        <taxon>Bacillus</taxon>
        <taxon>Bacillus cereus group</taxon>
    </lineage>
</organism>
<gene>
    <name evidence="1" type="primary">dxs</name>
    <name type="ordered locus">BA_4400</name>
    <name type="ordered locus">GBAA_4400</name>
    <name type="ordered locus">BAS4081</name>
</gene>
<comment type="function">
    <text evidence="1">Catalyzes the acyloin condensation reaction between C atoms 2 and 3 of pyruvate and glyceraldehyde 3-phosphate to yield 1-deoxy-D-xylulose-5-phosphate (DXP).</text>
</comment>
<comment type="catalytic activity">
    <reaction evidence="1">
        <text>D-glyceraldehyde 3-phosphate + pyruvate + H(+) = 1-deoxy-D-xylulose 5-phosphate + CO2</text>
        <dbReference type="Rhea" id="RHEA:12605"/>
        <dbReference type="ChEBI" id="CHEBI:15361"/>
        <dbReference type="ChEBI" id="CHEBI:15378"/>
        <dbReference type="ChEBI" id="CHEBI:16526"/>
        <dbReference type="ChEBI" id="CHEBI:57792"/>
        <dbReference type="ChEBI" id="CHEBI:59776"/>
        <dbReference type="EC" id="2.2.1.7"/>
    </reaction>
</comment>
<comment type="cofactor">
    <cofactor evidence="1">
        <name>Mg(2+)</name>
        <dbReference type="ChEBI" id="CHEBI:18420"/>
    </cofactor>
    <text evidence="1">Binds 1 Mg(2+) ion per subunit.</text>
</comment>
<comment type="cofactor">
    <cofactor evidence="1">
        <name>thiamine diphosphate</name>
        <dbReference type="ChEBI" id="CHEBI:58937"/>
    </cofactor>
    <text evidence="1">Binds 1 thiamine pyrophosphate per subunit.</text>
</comment>
<comment type="pathway">
    <text evidence="1">Metabolic intermediate biosynthesis; 1-deoxy-D-xylulose 5-phosphate biosynthesis; 1-deoxy-D-xylulose 5-phosphate from D-glyceraldehyde 3-phosphate and pyruvate: step 1/1.</text>
</comment>
<comment type="subunit">
    <text evidence="1">Homodimer.</text>
</comment>
<comment type="similarity">
    <text evidence="1">Belongs to the transketolase family. DXPS subfamily.</text>
</comment>
<dbReference type="EC" id="2.2.1.7" evidence="1"/>
<dbReference type="EMBL" id="AE016879">
    <property type="protein sequence ID" value="AAP28115.1"/>
    <property type="molecule type" value="Genomic_DNA"/>
</dbReference>
<dbReference type="EMBL" id="AE017334">
    <property type="protein sequence ID" value="AAT33519.1"/>
    <property type="molecule type" value="Genomic_DNA"/>
</dbReference>
<dbReference type="EMBL" id="AE017225">
    <property type="protein sequence ID" value="AAT56382.1"/>
    <property type="molecule type" value="Genomic_DNA"/>
</dbReference>
<dbReference type="RefSeq" id="NP_846629.1">
    <property type="nucleotide sequence ID" value="NC_003997.3"/>
</dbReference>
<dbReference type="RefSeq" id="WP_000366447.1">
    <property type="nucleotide sequence ID" value="NZ_WXXJ01000027.1"/>
</dbReference>
<dbReference type="RefSeq" id="YP_030331.1">
    <property type="nucleotide sequence ID" value="NC_005945.1"/>
</dbReference>
<dbReference type="SMR" id="Q81M54"/>
<dbReference type="STRING" id="261594.GBAA_4400"/>
<dbReference type="DNASU" id="1087729"/>
<dbReference type="GeneID" id="45024060"/>
<dbReference type="KEGG" id="ban:BA_4400"/>
<dbReference type="KEGG" id="banh:HYU01_21475"/>
<dbReference type="KEGG" id="bar:GBAA_4400"/>
<dbReference type="KEGG" id="bat:BAS4081"/>
<dbReference type="PATRIC" id="fig|198094.11.peg.4369"/>
<dbReference type="eggNOG" id="COG1154">
    <property type="taxonomic scope" value="Bacteria"/>
</dbReference>
<dbReference type="HOGENOM" id="CLU_009227_1_4_9"/>
<dbReference type="OMA" id="QVGYHAQ"/>
<dbReference type="OrthoDB" id="9803371at2"/>
<dbReference type="UniPathway" id="UPA00064">
    <property type="reaction ID" value="UER00091"/>
</dbReference>
<dbReference type="Proteomes" id="UP000000427">
    <property type="component" value="Chromosome"/>
</dbReference>
<dbReference type="Proteomes" id="UP000000594">
    <property type="component" value="Chromosome"/>
</dbReference>
<dbReference type="GO" id="GO:0005829">
    <property type="term" value="C:cytosol"/>
    <property type="evidence" value="ECO:0007669"/>
    <property type="project" value="TreeGrafter"/>
</dbReference>
<dbReference type="GO" id="GO:0008661">
    <property type="term" value="F:1-deoxy-D-xylulose-5-phosphate synthase activity"/>
    <property type="evidence" value="ECO:0007669"/>
    <property type="project" value="UniProtKB-UniRule"/>
</dbReference>
<dbReference type="GO" id="GO:0000287">
    <property type="term" value="F:magnesium ion binding"/>
    <property type="evidence" value="ECO:0007669"/>
    <property type="project" value="UniProtKB-UniRule"/>
</dbReference>
<dbReference type="GO" id="GO:0030976">
    <property type="term" value="F:thiamine pyrophosphate binding"/>
    <property type="evidence" value="ECO:0007669"/>
    <property type="project" value="UniProtKB-UniRule"/>
</dbReference>
<dbReference type="GO" id="GO:0052865">
    <property type="term" value="P:1-deoxy-D-xylulose 5-phosphate biosynthetic process"/>
    <property type="evidence" value="ECO:0007669"/>
    <property type="project" value="UniProtKB-UniPathway"/>
</dbReference>
<dbReference type="GO" id="GO:0019288">
    <property type="term" value="P:isopentenyl diphosphate biosynthetic process, methylerythritol 4-phosphate pathway"/>
    <property type="evidence" value="ECO:0007669"/>
    <property type="project" value="TreeGrafter"/>
</dbReference>
<dbReference type="GO" id="GO:0016114">
    <property type="term" value="P:terpenoid biosynthetic process"/>
    <property type="evidence" value="ECO:0007669"/>
    <property type="project" value="UniProtKB-UniRule"/>
</dbReference>
<dbReference type="GO" id="GO:0009228">
    <property type="term" value="P:thiamine biosynthetic process"/>
    <property type="evidence" value="ECO:0007669"/>
    <property type="project" value="UniProtKB-UniRule"/>
</dbReference>
<dbReference type="CDD" id="cd02007">
    <property type="entry name" value="TPP_DXS"/>
    <property type="match status" value="1"/>
</dbReference>
<dbReference type="CDD" id="cd07033">
    <property type="entry name" value="TPP_PYR_DXS_TK_like"/>
    <property type="match status" value="1"/>
</dbReference>
<dbReference type="FunFam" id="3.40.50.920:FF:000002">
    <property type="entry name" value="1-deoxy-D-xylulose-5-phosphate synthase"/>
    <property type="match status" value="1"/>
</dbReference>
<dbReference type="FunFam" id="3.40.50.970:FF:000030">
    <property type="entry name" value="1-deoxy-D-xylulose-5-phosphate synthase"/>
    <property type="match status" value="1"/>
</dbReference>
<dbReference type="Gene3D" id="3.40.50.920">
    <property type="match status" value="1"/>
</dbReference>
<dbReference type="Gene3D" id="3.40.50.970">
    <property type="match status" value="2"/>
</dbReference>
<dbReference type="HAMAP" id="MF_00315">
    <property type="entry name" value="DXP_synth"/>
    <property type="match status" value="1"/>
</dbReference>
<dbReference type="InterPro" id="IPR005477">
    <property type="entry name" value="Dxylulose-5-P_synthase"/>
</dbReference>
<dbReference type="InterPro" id="IPR029061">
    <property type="entry name" value="THDP-binding"/>
</dbReference>
<dbReference type="InterPro" id="IPR009014">
    <property type="entry name" value="Transketo_C/PFOR_II"/>
</dbReference>
<dbReference type="InterPro" id="IPR005475">
    <property type="entry name" value="Transketolase-like_Pyr-bd"/>
</dbReference>
<dbReference type="InterPro" id="IPR020826">
    <property type="entry name" value="Transketolase_BS"/>
</dbReference>
<dbReference type="InterPro" id="IPR033248">
    <property type="entry name" value="Transketolase_C"/>
</dbReference>
<dbReference type="InterPro" id="IPR049557">
    <property type="entry name" value="Transketolase_CS"/>
</dbReference>
<dbReference type="NCBIfam" id="TIGR00204">
    <property type="entry name" value="dxs"/>
    <property type="match status" value="1"/>
</dbReference>
<dbReference type="NCBIfam" id="NF003933">
    <property type="entry name" value="PRK05444.2-2"/>
    <property type="match status" value="1"/>
</dbReference>
<dbReference type="PANTHER" id="PTHR43322">
    <property type="entry name" value="1-D-DEOXYXYLULOSE 5-PHOSPHATE SYNTHASE-RELATED"/>
    <property type="match status" value="1"/>
</dbReference>
<dbReference type="PANTHER" id="PTHR43322:SF5">
    <property type="entry name" value="1-DEOXY-D-XYLULOSE-5-PHOSPHATE SYNTHASE, CHLOROPLASTIC"/>
    <property type="match status" value="1"/>
</dbReference>
<dbReference type="Pfam" id="PF13292">
    <property type="entry name" value="DXP_synthase_N"/>
    <property type="match status" value="1"/>
</dbReference>
<dbReference type="Pfam" id="PF02779">
    <property type="entry name" value="Transket_pyr"/>
    <property type="match status" value="1"/>
</dbReference>
<dbReference type="Pfam" id="PF02780">
    <property type="entry name" value="Transketolase_C"/>
    <property type="match status" value="1"/>
</dbReference>
<dbReference type="SMART" id="SM00861">
    <property type="entry name" value="Transket_pyr"/>
    <property type="match status" value="1"/>
</dbReference>
<dbReference type="SUPFAM" id="SSF52518">
    <property type="entry name" value="Thiamin diphosphate-binding fold (THDP-binding)"/>
    <property type="match status" value="2"/>
</dbReference>
<dbReference type="SUPFAM" id="SSF52922">
    <property type="entry name" value="TK C-terminal domain-like"/>
    <property type="match status" value="1"/>
</dbReference>
<dbReference type="PROSITE" id="PS00801">
    <property type="entry name" value="TRANSKETOLASE_1"/>
    <property type="match status" value="1"/>
</dbReference>
<dbReference type="PROSITE" id="PS00802">
    <property type="entry name" value="TRANSKETOLASE_2"/>
    <property type="match status" value="1"/>
</dbReference>
<evidence type="ECO:0000255" key="1">
    <source>
        <dbReference type="HAMAP-Rule" id="MF_00315"/>
    </source>
</evidence>
<keyword id="KW-0414">Isoprene biosynthesis</keyword>
<keyword id="KW-0460">Magnesium</keyword>
<keyword id="KW-0479">Metal-binding</keyword>
<keyword id="KW-1185">Reference proteome</keyword>
<keyword id="KW-0784">Thiamine biosynthesis</keyword>
<keyword id="KW-0786">Thiamine pyrophosphate</keyword>
<keyword id="KW-0808">Transferase</keyword>
<accession>Q81M54</accession>
<accession>Q6HTK7</accession>
<accession>Q6KMU7</accession>
<protein>
    <recommendedName>
        <fullName evidence="1">1-deoxy-D-xylulose-5-phosphate synthase</fullName>
        <ecNumber evidence="1">2.2.1.7</ecNumber>
    </recommendedName>
    <alternativeName>
        <fullName evidence="1">1-deoxyxylulose-5-phosphate synthase</fullName>
        <shortName evidence="1">DXP synthase</shortName>
        <shortName evidence="1">DXPS</shortName>
    </alternativeName>
</protein>
<proteinExistence type="inferred from homology"/>
<sequence>MDLTQIQNPSFLKDMSISELEGLSEDIRKFLIEELSQTGGHIAPNLGVVELTIALHKLFDSPKDKFLWDVGHQSYVHKILTGRAKEFGTLRQYQGLCGFPKRCESEHDVWETGHSSTSLSAAMGMALARDLKKTKEYVIPIIGDGALTGGMALEALNHIGHEKTDMIVILNDNEMSIAPNVGALHNVLGRLRTAGKYHWVKDELEYILKKIPAVGGKVAATAEKIKDSLKYLLVSGVFFEELGFTYLGPVDGHDYEKLFETLQYAKKTKGPVLVHVITKKGKGYKPAESDVIGTWHGTGPYKIESGDFVKPKEVAPAWSAVVSETVLKLARTDERIVAITPAMPVGSKLEKFQKEFPDRMIDVGIAEQHATTMAAGMATQGMKPFLAIYSTFLQRAYDQVVHDICRQNLNVFIGIDRSGLVGADGETHQGVFDISFLRHLPNMVIMMPKDENEGQHLVYTAMQYEDGPIALRYARGNGLGVHMDEELKAIPIGSWETLKEGTQAAILTFGTTIPMAMEAAERLEKAGVSVKVVNARFIKPMDEAYLHDLLGKNIPILTIEEACLIGGFGTGVVEFASENGYHSALVERMGIPDRFIEHGSVTKLLEEIGLTTDAVVDRIHTMIPSKQKRA</sequence>
<name>DXS_BACAN</name>
<reference key="1">
    <citation type="journal article" date="2003" name="Nature">
        <title>The genome sequence of Bacillus anthracis Ames and comparison to closely related bacteria.</title>
        <authorList>
            <person name="Read T.D."/>
            <person name="Peterson S.N."/>
            <person name="Tourasse N.J."/>
            <person name="Baillie L.W."/>
            <person name="Paulsen I.T."/>
            <person name="Nelson K.E."/>
            <person name="Tettelin H."/>
            <person name="Fouts D.E."/>
            <person name="Eisen J.A."/>
            <person name="Gill S.R."/>
            <person name="Holtzapple E.K."/>
            <person name="Okstad O.A."/>
            <person name="Helgason E."/>
            <person name="Rilstone J."/>
            <person name="Wu M."/>
            <person name="Kolonay J.F."/>
            <person name="Beanan M.J."/>
            <person name="Dodson R.J."/>
            <person name="Brinkac L.M."/>
            <person name="Gwinn M.L."/>
            <person name="DeBoy R.T."/>
            <person name="Madpu R."/>
            <person name="Daugherty S.C."/>
            <person name="Durkin A.S."/>
            <person name="Haft D.H."/>
            <person name="Nelson W.C."/>
            <person name="Peterson J.D."/>
            <person name="Pop M."/>
            <person name="Khouri H.M."/>
            <person name="Radune D."/>
            <person name="Benton J.L."/>
            <person name="Mahamoud Y."/>
            <person name="Jiang L."/>
            <person name="Hance I.R."/>
            <person name="Weidman J.F."/>
            <person name="Berry K.J."/>
            <person name="Plaut R.D."/>
            <person name="Wolf A.M."/>
            <person name="Watkins K.L."/>
            <person name="Nierman W.C."/>
            <person name="Hazen A."/>
            <person name="Cline R.T."/>
            <person name="Redmond C."/>
            <person name="Thwaite J.E."/>
            <person name="White O."/>
            <person name="Salzberg S.L."/>
            <person name="Thomason B."/>
            <person name="Friedlander A.M."/>
            <person name="Koehler T.M."/>
            <person name="Hanna P.C."/>
            <person name="Kolstoe A.-B."/>
            <person name="Fraser C.M."/>
        </authorList>
    </citation>
    <scope>NUCLEOTIDE SEQUENCE [LARGE SCALE GENOMIC DNA]</scope>
    <source>
        <strain>Ames / isolate Porton</strain>
    </source>
</reference>
<reference key="2">
    <citation type="journal article" date="2009" name="J. Bacteriol.">
        <title>The complete genome sequence of Bacillus anthracis Ames 'Ancestor'.</title>
        <authorList>
            <person name="Ravel J."/>
            <person name="Jiang L."/>
            <person name="Stanley S.T."/>
            <person name="Wilson M.R."/>
            <person name="Decker R.S."/>
            <person name="Read T.D."/>
            <person name="Worsham P."/>
            <person name="Keim P.S."/>
            <person name="Salzberg S.L."/>
            <person name="Fraser-Liggett C.M."/>
            <person name="Rasko D.A."/>
        </authorList>
    </citation>
    <scope>NUCLEOTIDE SEQUENCE [LARGE SCALE GENOMIC DNA]</scope>
    <source>
        <strain>Ames ancestor</strain>
    </source>
</reference>
<reference key="3">
    <citation type="submission" date="2004-01" db="EMBL/GenBank/DDBJ databases">
        <title>Complete genome sequence of Bacillus anthracis Sterne.</title>
        <authorList>
            <person name="Brettin T.S."/>
            <person name="Bruce D."/>
            <person name="Challacombe J.F."/>
            <person name="Gilna P."/>
            <person name="Han C."/>
            <person name="Hill K."/>
            <person name="Hitchcock P."/>
            <person name="Jackson P."/>
            <person name="Keim P."/>
            <person name="Longmire J."/>
            <person name="Lucas S."/>
            <person name="Okinaka R."/>
            <person name="Richardson P."/>
            <person name="Rubin E."/>
            <person name="Tice H."/>
        </authorList>
    </citation>
    <scope>NUCLEOTIDE SEQUENCE [LARGE SCALE GENOMIC DNA]</scope>
    <source>
        <strain>Sterne</strain>
    </source>
</reference>